<protein>
    <recommendedName>
        <fullName>Kinesin-like protein KIF16B</fullName>
    </recommendedName>
    <alternativeName>
        <fullName>Sorting nexin-23</fullName>
    </alternativeName>
</protein>
<evidence type="ECO:0000250" key="1"/>
<evidence type="ECO:0000255" key="2"/>
<evidence type="ECO:0000255" key="3">
    <source>
        <dbReference type="PROSITE-ProRule" id="PRU00147"/>
    </source>
</evidence>
<evidence type="ECO:0000255" key="4">
    <source>
        <dbReference type="PROSITE-ProRule" id="PRU00283"/>
    </source>
</evidence>
<evidence type="ECO:0000256" key="5">
    <source>
        <dbReference type="SAM" id="MobiDB-lite"/>
    </source>
</evidence>
<evidence type="ECO:0000269" key="6">
    <source>
    </source>
</evidence>
<evidence type="ECO:0000269" key="7">
    <source>
    </source>
</evidence>
<evidence type="ECO:0000269" key="8">
    <source>
    </source>
</evidence>
<evidence type="ECO:0000269" key="9">
    <source>
    </source>
</evidence>
<evidence type="ECO:0000269" key="10">
    <source>
    </source>
</evidence>
<evidence type="ECO:0000269" key="11">
    <source>
    </source>
</evidence>
<evidence type="ECO:0000269" key="12">
    <source>
    </source>
</evidence>
<evidence type="ECO:0000269" key="13">
    <source>
    </source>
</evidence>
<evidence type="ECO:0000303" key="14">
    <source>
    </source>
</evidence>
<evidence type="ECO:0000303" key="15">
    <source>
    </source>
</evidence>
<evidence type="ECO:0000303" key="16">
    <source>
    </source>
</evidence>
<evidence type="ECO:0000305" key="17"/>
<evidence type="ECO:0007744" key="18">
    <source>
    </source>
</evidence>
<evidence type="ECO:0007829" key="19">
    <source>
        <dbReference type="PDB" id="2V14"/>
    </source>
</evidence>
<evidence type="ECO:0007829" key="20">
    <source>
        <dbReference type="PDB" id="6EE0"/>
    </source>
</evidence>
<reference key="1">
    <citation type="journal article" date="2000" name="DNA Res.">
        <title>Prediction of the coding sequences of unidentified human genes. XVIII. The complete sequences of 100 new cDNA clones from brain which code for large proteins in vitro.</title>
        <authorList>
            <person name="Nagase T."/>
            <person name="Kikuno R."/>
            <person name="Nakayama M."/>
            <person name="Hirosawa M."/>
            <person name="Ohara O."/>
        </authorList>
    </citation>
    <scope>NUCLEOTIDE SEQUENCE [LARGE SCALE MRNA] (ISOFORM 2)</scope>
    <scope>VARIANT THR-1027</scope>
    <source>
        <tissue>Brain</tissue>
    </source>
</reference>
<reference key="2">
    <citation type="journal article" date="2007" name="BMC Genomics">
        <title>The full-ORF clone resource of the German cDNA consortium.</title>
        <authorList>
            <person name="Bechtel S."/>
            <person name="Rosenfelder H."/>
            <person name="Duda A."/>
            <person name="Schmidt C.P."/>
            <person name="Ernst U."/>
            <person name="Wellenreuther R."/>
            <person name="Mehrle A."/>
            <person name="Schuster C."/>
            <person name="Bahr A."/>
            <person name="Bloecker H."/>
            <person name="Heubner D."/>
            <person name="Hoerlein A."/>
            <person name="Michel G."/>
            <person name="Wedler H."/>
            <person name="Koehrer K."/>
            <person name="Ottenwaelder B."/>
            <person name="Poustka A."/>
            <person name="Wiemann S."/>
            <person name="Schupp I."/>
        </authorList>
    </citation>
    <scope>NUCLEOTIDE SEQUENCE [LARGE SCALE MRNA] (ISOFORM 1)</scope>
    <scope>NUCLEOTIDE SEQUENCE [LARGE SCALE MRNA] OF 557-1317 (ISOFORM 4)</scope>
    <scope>VARIANT THR-1027</scope>
    <source>
        <tissue>Adipose tissue</tissue>
        <tissue>Salivary gland</tissue>
    </source>
</reference>
<reference key="3">
    <citation type="submission" date="2002-10" db="EMBL/GenBank/DDBJ databases">
        <authorList>
            <person name="Guo J.H."/>
        </authorList>
    </citation>
    <scope>NUCLEOTIDE SEQUENCE [LARGE SCALE MRNA] (ISOFORM 1)</scope>
    <source>
        <tissue>Brain</tissue>
    </source>
</reference>
<reference key="4">
    <citation type="journal article" date="2001" name="Nature">
        <title>The DNA sequence and comparative analysis of human chromosome 20.</title>
        <authorList>
            <person name="Deloukas P."/>
            <person name="Matthews L.H."/>
            <person name="Ashurst J.L."/>
            <person name="Burton J."/>
            <person name="Gilbert J.G.R."/>
            <person name="Jones M."/>
            <person name="Stavrides G."/>
            <person name="Almeida J.P."/>
            <person name="Babbage A.K."/>
            <person name="Bagguley C.L."/>
            <person name="Bailey J."/>
            <person name="Barlow K.F."/>
            <person name="Bates K.N."/>
            <person name="Beard L.M."/>
            <person name="Beare D.M."/>
            <person name="Beasley O.P."/>
            <person name="Bird C.P."/>
            <person name="Blakey S.E."/>
            <person name="Bridgeman A.M."/>
            <person name="Brown A.J."/>
            <person name="Buck D."/>
            <person name="Burrill W.D."/>
            <person name="Butler A.P."/>
            <person name="Carder C."/>
            <person name="Carter N.P."/>
            <person name="Chapman J.C."/>
            <person name="Clamp M."/>
            <person name="Clark G."/>
            <person name="Clark L.N."/>
            <person name="Clark S.Y."/>
            <person name="Clee C.M."/>
            <person name="Clegg S."/>
            <person name="Cobley V.E."/>
            <person name="Collier R.E."/>
            <person name="Connor R.E."/>
            <person name="Corby N.R."/>
            <person name="Coulson A."/>
            <person name="Coville G.J."/>
            <person name="Deadman R."/>
            <person name="Dhami P.D."/>
            <person name="Dunn M."/>
            <person name="Ellington A.G."/>
            <person name="Frankland J.A."/>
            <person name="Fraser A."/>
            <person name="French L."/>
            <person name="Garner P."/>
            <person name="Grafham D.V."/>
            <person name="Griffiths C."/>
            <person name="Griffiths M.N.D."/>
            <person name="Gwilliam R."/>
            <person name="Hall R.E."/>
            <person name="Hammond S."/>
            <person name="Harley J.L."/>
            <person name="Heath P.D."/>
            <person name="Ho S."/>
            <person name="Holden J.L."/>
            <person name="Howden P.J."/>
            <person name="Huckle E."/>
            <person name="Hunt A.R."/>
            <person name="Hunt S.E."/>
            <person name="Jekosch K."/>
            <person name="Johnson C.M."/>
            <person name="Johnson D."/>
            <person name="Kay M.P."/>
            <person name="Kimberley A.M."/>
            <person name="King A."/>
            <person name="Knights A."/>
            <person name="Laird G.K."/>
            <person name="Lawlor S."/>
            <person name="Lehvaeslaiho M.H."/>
            <person name="Leversha M.A."/>
            <person name="Lloyd C."/>
            <person name="Lloyd D.M."/>
            <person name="Lovell J.D."/>
            <person name="Marsh V.L."/>
            <person name="Martin S.L."/>
            <person name="McConnachie L.J."/>
            <person name="McLay K."/>
            <person name="McMurray A.A."/>
            <person name="Milne S.A."/>
            <person name="Mistry D."/>
            <person name="Moore M.J.F."/>
            <person name="Mullikin J.C."/>
            <person name="Nickerson T."/>
            <person name="Oliver K."/>
            <person name="Parker A."/>
            <person name="Patel R."/>
            <person name="Pearce T.A.V."/>
            <person name="Peck A.I."/>
            <person name="Phillimore B.J.C.T."/>
            <person name="Prathalingam S.R."/>
            <person name="Plumb R.W."/>
            <person name="Ramsay H."/>
            <person name="Rice C.M."/>
            <person name="Ross M.T."/>
            <person name="Scott C.E."/>
            <person name="Sehra H.K."/>
            <person name="Shownkeen R."/>
            <person name="Sims S."/>
            <person name="Skuce C.D."/>
            <person name="Smith M.L."/>
            <person name="Soderlund C."/>
            <person name="Steward C.A."/>
            <person name="Sulston J.E."/>
            <person name="Swann R.M."/>
            <person name="Sycamore N."/>
            <person name="Taylor R."/>
            <person name="Tee L."/>
            <person name="Thomas D.W."/>
            <person name="Thorpe A."/>
            <person name="Tracey A."/>
            <person name="Tromans A.C."/>
            <person name="Vaudin M."/>
            <person name="Wall M."/>
            <person name="Wallis J.M."/>
            <person name="Whitehead S.L."/>
            <person name="Whittaker P."/>
            <person name="Willey D.L."/>
            <person name="Williams L."/>
            <person name="Williams S.A."/>
            <person name="Wilming L."/>
            <person name="Wray P.W."/>
            <person name="Hubbard T."/>
            <person name="Durbin R.M."/>
            <person name="Bentley D.R."/>
            <person name="Beck S."/>
            <person name="Rogers J."/>
        </authorList>
    </citation>
    <scope>NUCLEOTIDE SEQUENCE [LARGE SCALE GENOMIC DNA]</scope>
</reference>
<reference key="5">
    <citation type="submission" date="2005-09" db="EMBL/GenBank/DDBJ databases">
        <authorList>
            <person name="Mural R.J."/>
            <person name="Istrail S."/>
            <person name="Sutton G.G."/>
            <person name="Florea L."/>
            <person name="Halpern A.L."/>
            <person name="Mobarry C.M."/>
            <person name="Lippert R."/>
            <person name="Walenz B."/>
            <person name="Shatkay H."/>
            <person name="Dew I."/>
            <person name="Miller J.R."/>
            <person name="Flanigan M.J."/>
            <person name="Edwards N.J."/>
            <person name="Bolanos R."/>
            <person name="Fasulo D."/>
            <person name="Halldorsson B.V."/>
            <person name="Hannenhalli S."/>
            <person name="Turner R."/>
            <person name="Yooseph S."/>
            <person name="Lu F."/>
            <person name="Nusskern D.R."/>
            <person name="Shue B.C."/>
            <person name="Zheng X.H."/>
            <person name="Zhong F."/>
            <person name="Delcher A.L."/>
            <person name="Huson D.H."/>
            <person name="Kravitz S.A."/>
            <person name="Mouchard L."/>
            <person name="Reinert K."/>
            <person name="Remington K.A."/>
            <person name="Clark A.G."/>
            <person name="Waterman M.S."/>
            <person name="Eichler E.E."/>
            <person name="Adams M.D."/>
            <person name="Hunkapiller M.W."/>
            <person name="Myers E.W."/>
            <person name="Venter J.C."/>
        </authorList>
    </citation>
    <scope>NUCLEOTIDE SEQUENCE [LARGE SCALE GENOMIC DNA]</scope>
</reference>
<reference key="6">
    <citation type="journal article" date="2004" name="Genome Res.">
        <title>The status, quality, and expansion of the NIH full-length cDNA project: the Mammalian Gene Collection (MGC).</title>
        <authorList>
            <consortium name="The MGC Project Team"/>
        </authorList>
    </citation>
    <scope>NUCLEOTIDE SEQUENCE [LARGE SCALE MRNA] (ISOFORM 2)</scope>
    <scope>NUCLEOTIDE SEQUENCE [LARGE SCALE MRNA] OF 916-1317 (ISOFORM 5)</scope>
    <scope>NUCLEOTIDE SEQUENCE [LARGE SCALE MRNA] OF 1056-1317 (ISOFORM 3)</scope>
    <scope>VARIANT THR-1027</scope>
    <source>
        <tissue>Hippocampus</tissue>
        <tissue>Liver</tissue>
    </source>
</reference>
<reference key="7">
    <citation type="journal article" date="2004" name="Nat. Genet.">
        <title>Complete sequencing and characterization of 21,243 full-length human cDNAs.</title>
        <authorList>
            <person name="Ota T."/>
            <person name="Suzuki Y."/>
            <person name="Nishikawa T."/>
            <person name="Otsuki T."/>
            <person name="Sugiyama T."/>
            <person name="Irie R."/>
            <person name="Wakamatsu A."/>
            <person name="Hayashi K."/>
            <person name="Sato H."/>
            <person name="Nagai K."/>
            <person name="Kimura K."/>
            <person name="Makita H."/>
            <person name="Sekine M."/>
            <person name="Obayashi M."/>
            <person name="Nishi T."/>
            <person name="Shibahara T."/>
            <person name="Tanaka T."/>
            <person name="Ishii S."/>
            <person name="Yamamoto J."/>
            <person name="Saito K."/>
            <person name="Kawai Y."/>
            <person name="Isono Y."/>
            <person name="Nakamura Y."/>
            <person name="Nagahari K."/>
            <person name="Murakami K."/>
            <person name="Yasuda T."/>
            <person name="Iwayanagi T."/>
            <person name="Wagatsuma M."/>
            <person name="Shiratori A."/>
            <person name="Sudo H."/>
            <person name="Hosoiri T."/>
            <person name="Kaku Y."/>
            <person name="Kodaira H."/>
            <person name="Kondo H."/>
            <person name="Sugawara M."/>
            <person name="Takahashi M."/>
            <person name="Kanda K."/>
            <person name="Yokoi T."/>
            <person name="Furuya T."/>
            <person name="Kikkawa E."/>
            <person name="Omura Y."/>
            <person name="Abe K."/>
            <person name="Kamihara K."/>
            <person name="Katsuta N."/>
            <person name="Sato K."/>
            <person name="Tanikawa M."/>
            <person name="Yamazaki M."/>
            <person name="Ninomiya K."/>
            <person name="Ishibashi T."/>
            <person name="Yamashita H."/>
            <person name="Murakawa K."/>
            <person name="Fujimori K."/>
            <person name="Tanai H."/>
            <person name="Kimata M."/>
            <person name="Watanabe M."/>
            <person name="Hiraoka S."/>
            <person name="Chiba Y."/>
            <person name="Ishida S."/>
            <person name="Ono Y."/>
            <person name="Takiguchi S."/>
            <person name="Watanabe S."/>
            <person name="Yosida M."/>
            <person name="Hotuta T."/>
            <person name="Kusano J."/>
            <person name="Kanehori K."/>
            <person name="Takahashi-Fujii A."/>
            <person name="Hara H."/>
            <person name="Tanase T.-O."/>
            <person name="Nomura Y."/>
            <person name="Togiya S."/>
            <person name="Komai F."/>
            <person name="Hara R."/>
            <person name="Takeuchi K."/>
            <person name="Arita M."/>
            <person name="Imose N."/>
            <person name="Musashino K."/>
            <person name="Yuuki H."/>
            <person name="Oshima A."/>
            <person name="Sasaki N."/>
            <person name="Aotsuka S."/>
            <person name="Yoshikawa Y."/>
            <person name="Matsunawa H."/>
            <person name="Ichihara T."/>
            <person name="Shiohata N."/>
            <person name="Sano S."/>
            <person name="Moriya S."/>
            <person name="Momiyama H."/>
            <person name="Satoh N."/>
            <person name="Takami S."/>
            <person name="Terashima Y."/>
            <person name="Suzuki O."/>
            <person name="Nakagawa S."/>
            <person name="Senoh A."/>
            <person name="Mizoguchi H."/>
            <person name="Goto Y."/>
            <person name="Shimizu F."/>
            <person name="Wakebe H."/>
            <person name="Hishigaki H."/>
            <person name="Watanabe T."/>
            <person name="Sugiyama A."/>
            <person name="Takemoto M."/>
            <person name="Kawakami B."/>
            <person name="Yamazaki M."/>
            <person name="Watanabe K."/>
            <person name="Kumagai A."/>
            <person name="Itakura S."/>
            <person name="Fukuzumi Y."/>
            <person name="Fujimori Y."/>
            <person name="Komiyama M."/>
            <person name="Tashiro H."/>
            <person name="Tanigami A."/>
            <person name="Fujiwara T."/>
            <person name="Ono T."/>
            <person name="Yamada K."/>
            <person name="Fujii Y."/>
            <person name="Ozaki K."/>
            <person name="Hirao M."/>
            <person name="Ohmori Y."/>
            <person name="Kawabata A."/>
            <person name="Hikiji T."/>
            <person name="Kobatake N."/>
            <person name="Inagaki H."/>
            <person name="Ikema Y."/>
            <person name="Okamoto S."/>
            <person name="Okitani R."/>
            <person name="Kawakami T."/>
            <person name="Noguchi S."/>
            <person name="Itoh T."/>
            <person name="Shigeta K."/>
            <person name="Senba T."/>
            <person name="Matsumura K."/>
            <person name="Nakajima Y."/>
            <person name="Mizuno T."/>
            <person name="Morinaga M."/>
            <person name="Sasaki M."/>
            <person name="Togashi T."/>
            <person name="Oyama M."/>
            <person name="Hata H."/>
            <person name="Watanabe M."/>
            <person name="Komatsu T."/>
            <person name="Mizushima-Sugano J."/>
            <person name="Satoh T."/>
            <person name="Shirai Y."/>
            <person name="Takahashi Y."/>
            <person name="Nakagawa K."/>
            <person name="Okumura K."/>
            <person name="Nagase T."/>
            <person name="Nomura N."/>
            <person name="Kikuchi H."/>
            <person name="Masuho Y."/>
            <person name="Yamashita R."/>
            <person name="Nakai K."/>
            <person name="Yada T."/>
            <person name="Nakamura Y."/>
            <person name="Ohara O."/>
            <person name="Isogai T."/>
            <person name="Sugano S."/>
        </authorList>
    </citation>
    <scope>NUCLEOTIDE SEQUENCE [LARGE SCALE MRNA] OF 1-948 (ISOFORMS 1/2/3)</scope>
    <scope>NUCLEOTIDE SEQUENCE [LARGE SCALE MRNA] OF 1085-1317 (ISOFORMS 1/4)</scope>
    <source>
        <tissue>Colon</tissue>
        <tissue>Lung</tissue>
        <tissue>Tongue</tissue>
    </source>
</reference>
<reference key="8">
    <citation type="submission" date="2001-07" db="EMBL/GenBank/DDBJ databases">
        <title>A new member (SNX23) of the sorting nexin family.</title>
        <authorList>
            <person name="Hong W."/>
        </authorList>
    </citation>
    <scope>NUCLEOTIDE SEQUENCE [MRNA] OF 1114-1317 (ISOFORMS 1/4)</scope>
</reference>
<reference key="9">
    <citation type="journal article" date="2005" name="Cell">
        <title>Modulation of receptor recycling and degradation by the endosomal kinesin KIF16B.</title>
        <authorList>
            <person name="Hoepfner S."/>
            <person name="Severin F."/>
            <person name="Cabezas A."/>
            <person name="Habermann B."/>
            <person name="Runge A."/>
            <person name="Gillooly D."/>
            <person name="Stenmark H."/>
            <person name="Zerial M."/>
        </authorList>
    </citation>
    <scope>FUNCTION</scope>
    <scope>DOMAIN PX</scope>
    <scope>PHOSPHATIDYLINOSITOL-BINDING</scope>
    <scope>SUBCELLULAR LOCATION</scope>
    <scope>TISSUE SPECIFICITY</scope>
    <scope>MUTAGENESIS OF SER-109</scope>
</reference>
<reference key="10">
    <citation type="journal article" date="2008" name="J. Cell Sci.">
        <title>EML3 is a nuclear microtubule-binding protein required for the correct alignment of chromosomes in metaphase.</title>
        <authorList>
            <person name="Tegha-Dunghu J."/>
            <person name="Neumann B."/>
            <person name="Reber S."/>
            <person name="Krause R."/>
            <person name="Erfle H."/>
            <person name="Walter T."/>
            <person name="Held M."/>
            <person name="Rogers P."/>
            <person name="Hupfeld K."/>
            <person name="Ruppert T."/>
            <person name="Ellenberg J."/>
            <person name="Gruss O.J."/>
        </authorList>
    </citation>
    <scope>SUBCELLULAR LOCATION</scope>
</reference>
<reference key="11">
    <citation type="journal article" date="2010" name="J. Biol. Chem.">
        <title>PTPD1 supports receptor stability and mitogenic signaling in bladder cancer cells.</title>
        <authorList>
            <person name="Carlucci A."/>
            <person name="Porpora M."/>
            <person name="Garbi C."/>
            <person name="Galgani M."/>
            <person name="Santoriello M."/>
            <person name="Mascolo M."/>
            <person name="di Lorenzo D."/>
            <person name="Altieri V."/>
            <person name="Quarto M."/>
            <person name="Terracciano L."/>
            <person name="Gottesman M.E."/>
            <person name="Insabato L."/>
            <person name="Feliciello A."/>
        </authorList>
    </citation>
    <scope>INTERACTION WITH PTPN21</scope>
</reference>
<reference key="12">
    <citation type="journal article" date="2011" name="Sci. Signal.">
        <title>System-wide temporal characterization of the proteome and phosphoproteome of human embryonic stem cell differentiation.</title>
        <authorList>
            <person name="Rigbolt K.T."/>
            <person name="Prokhorova T.A."/>
            <person name="Akimov V."/>
            <person name="Henningsen J."/>
            <person name="Johansen P.T."/>
            <person name="Kratchmarova I."/>
            <person name="Kassem M."/>
            <person name="Mann M."/>
            <person name="Olsen J.V."/>
            <person name="Blagoev B."/>
        </authorList>
    </citation>
    <scope>IDENTIFICATION BY MASS SPECTROMETRY [LARGE SCALE ANALYSIS]</scope>
</reference>
<reference key="13">
    <citation type="journal article" date="2013" name="J. Proteome Res.">
        <title>Toward a comprehensive characterization of a human cancer cell phosphoproteome.</title>
        <authorList>
            <person name="Zhou H."/>
            <person name="Di Palma S."/>
            <person name="Preisinger C."/>
            <person name="Peng M."/>
            <person name="Polat A.N."/>
            <person name="Heck A.J."/>
            <person name="Mohammed S."/>
        </authorList>
    </citation>
    <scope>PHOSPHORYLATION [LARGE SCALE ANALYSIS] AT SER-398; THR-577; SER-582 AND SER-1052</scope>
    <scope>IDENTIFICATION BY MASS SPECTROMETRY [LARGE SCALE ANALYSIS]</scope>
    <source>
        <tissue>Erythroleukemia</tissue>
    </source>
</reference>
<reference key="14">
    <citation type="journal article" date="2007" name="EMBO J.">
        <title>The structural basis of novel endosome anchoring activity of KIF16B kinesin.</title>
        <authorList>
            <person name="Blatner N.R."/>
            <person name="Wilson M.I."/>
            <person name="Lei C."/>
            <person name="Hong W."/>
            <person name="Murray D."/>
            <person name="Williams R.L."/>
            <person name="Cho W."/>
        </authorList>
    </citation>
    <scope>X-RAY CRYSTALLOGRAPHY (2.2 ANGSTROMS) OF 1179-1312</scope>
    <scope>SUBCELLULAR LOCATION</scope>
    <scope>PHOSPHATIDYLINOSITOL-BINDING</scope>
    <scope>DOMAIN PX</scope>
    <scope>MUTAGENESIS OF ARG-1220; ARG-1225; LYS-1229; LYS-1232; LEU-1248; PHE-1249 AND ARG-1260</scope>
</reference>
<reference key="15">
    <citation type="journal article" date="2006" name="Science">
        <title>The consensus coding sequences of human breast and colorectal cancers.</title>
        <authorList>
            <person name="Sjoeblom T."/>
            <person name="Jones S."/>
            <person name="Wood L.D."/>
            <person name="Parsons D.W."/>
            <person name="Lin J."/>
            <person name="Barber T.D."/>
            <person name="Mandelker D."/>
            <person name="Leary R.J."/>
            <person name="Ptak J."/>
            <person name="Silliman N."/>
            <person name="Szabo S."/>
            <person name="Buckhaults P."/>
            <person name="Farrell C."/>
            <person name="Meeh P."/>
            <person name="Markowitz S.D."/>
            <person name="Willis J."/>
            <person name="Dawson D."/>
            <person name="Willson J.K.V."/>
            <person name="Gazdar A.F."/>
            <person name="Hartigan J."/>
            <person name="Wu L."/>
            <person name="Liu C."/>
            <person name="Parmigiani G."/>
            <person name="Park B.H."/>
            <person name="Bachman K.E."/>
            <person name="Papadopoulos N."/>
            <person name="Vogelstein B."/>
            <person name="Kinzler K.W."/>
            <person name="Velculescu V.E."/>
        </authorList>
    </citation>
    <scope>VARIANT [LARGE SCALE ANALYSIS] THR-772</scope>
</reference>
<comment type="function">
    <text evidence="8">Plus end-directed microtubule-dependent motor protein involved in endosome transport and receptor recycling and degradation. Regulates the plus end motility of early endosomes and the balance between recycling and degradation of receptors such as EGF receptor (EGFR) and FGF receptor (FGFR). Regulates the Golgi to endosome transport of FGFR-containing vesicles during early development, a key process for developing basement membrane and epiblast and primitive endoderm lineages during early postimplantation development.</text>
</comment>
<comment type="subunit">
    <text evidence="1 13">Interacts with RAB14 (By similarity). Interacts with PTPN21.</text>
</comment>
<comment type="interaction">
    <interactant intactId="EBI-10988217">
        <id>Q96L93-6</id>
    </interactant>
    <interactant intactId="EBI-720116">
        <id>P60520</id>
        <label>GABARAPL2</label>
    </interactant>
    <organismsDiffer>false</organismsDiffer>
    <experiments>3</experiments>
</comment>
<comment type="interaction">
    <interactant intactId="EBI-10988217">
        <id>Q96L93-6</id>
    </interactant>
    <interactant intactId="EBI-747500">
        <id>Q9BRT9</id>
        <label>GINS4</label>
    </interactant>
    <organismsDiffer>false</organismsDiffer>
    <experiments>3</experiments>
</comment>
<comment type="interaction">
    <interactant intactId="EBI-10988217">
        <id>Q96L93-6</id>
    </interactant>
    <interactant intactId="EBI-17178971">
        <id>Q14005-2</id>
        <label>IL16</label>
    </interactant>
    <organismsDiffer>false</organismsDiffer>
    <experiments>3</experiments>
</comment>
<comment type="interaction">
    <interactant intactId="EBI-10988217">
        <id>Q96L93-6</id>
    </interactant>
    <interactant intactId="EBI-1170392">
        <id>P17931</id>
        <label>LGALS3</label>
    </interactant>
    <organismsDiffer>false</organismsDiffer>
    <experiments>3</experiments>
</comment>
<comment type="interaction">
    <interactant intactId="EBI-10988217">
        <id>Q96L93-6</id>
    </interactant>
    <interactant intactId="EBI-1383852">
        <id>P54646</id>
        <label>PRKAA2</label>
    </interactant>
    <organismsDiffer>false</organismsDiffer>
    <experiments>3</experiments>
</comment>
<comment type="interaction">
    <interactant intactId="EBI-10988217">
        <id>Q96L93-6</id>
    </interactant>
    <interactant intactId="EBI-8463848">
        <id>Q8NB12</id>
        <label>SMYD1</label>
    </interactant>
    <organismsDiffer>false</organismsDiffer>
    <experiments>3</experiments>
</comment>
<comment type="interaction">
    <interactant intactId="EBI-10988217">
        <id>Q96L93-6</id>
    </interactant>
    <interactant intactId="EBI-11955057">
        <id>Q8N8B7-2</id>
        <label>TCEANC</label>
    </interactant>
    <organismsDiffer>false</organismsDiffer>
    <experiments>3</experiments>
</comment>
<comment type="interaction">
    <interactant intactId="EBI-10988217">
        <id>Q96L93-6</id>
    </interactant>
    <interactant intactId="EBI-746981">
        <id>Q969E8</id>
        <label>TSR2</label>
    </interactant>
    <organismsDiffer>false</organismsDiffer>
    <experiments>3</experiments>
</comment>
<comment type="subcellular location">
    <subcellularLocation>
        <location evidence="17">Cytoplasm</location>
        <location evidence="17">Cytoskeleton</location>
    </subcellularLocation>
    <subcellularLocation>
        <location evidence="8">Early endosome membrane</location>
    </subcellularLocation>
    <subcellularLocation>
        <location evidence="12">Cytoplasm</location>
    </subcellularLocation>
    <subcellularLocation>
        <location evidence="12">Cytoplasm</location>
        <location evidence="12">Cytoskeleton</location>
        <location evidence="12">Spindle</location>
    </subcellularLocation>
    <text evidence="8">It is unclear whether association with endosomes is mediated via phosphatidylinositol 3-phosphate (PtdIns(3)P)-binding or via its interaction with RAB14.</text>
</comment>
<comment type="alternative products">
    <event type="alternative splicing"/>
    <isoform>
        <id>Q96L93-1</id>
        <name>1</name>
        <sequence type="displayed"/>
    </isoform>
    <isoform>
        <id>Q96L93-2</id>
        <name>2</name>
        <sequence type="described" ref="VSP_010851"/>
    </isoform>
    <isoform>
        <id>Q96L93-4</id>
        <name>3</name>
        <sequence type="described" ref="VSP_010852"/>
    </isoform>
    <isoform>
        <id>Q96L93-5</id>
        <name>4</name>
        <sequence type="described" ref="VSP_015858"/>
    </isoform>
    <isoform>
        <id>Q96L93-6</id>
        <name>5</name>
        <sequence type="described" ref="VSP_041318"/>
    </isoform>
</comment>
<comment type="tissue specificity">
    <text evidence="8">Primarily expressed in brain. Also present in kidney, liver, intestine, placenta, leukocytes, heart and skeletal muscle (at protein level).</text>
</comment>
<comment type="domain">
    <text evidence="8 10">The PX domain mediates binding to phosphatidylinositol 3-phosphate (PtdIns(3)P), phosphatidylinositol 3,4-bisphosphate (PtdIns(3,4)P2), phosphatidylinositol 3,5-bisphosphate (PtdIns(3,5)P2) and phosphatidylinositol 3,4,5-trisphosphate (PtdIns(3,4,5)P3). Does not bind phosphatidylinositol 4,5-bisphosphate (PtdIns(4,5)P2).</text>
</comment>
<comment type="similarity">
    <text evidence="4">Belongs to the TRAFAC class myosin-kinesin ATPase superfamily. Kinesin family.</text>
</comment>
<comment type="sequence caution" evidence="17">
    <conflict type="erroneous initiation">
        <sequence resource="EMBL-CDS" id="BAA90971"/>
    </conflict>
    <text>Extended N-terminus.</text>
</comment>
<comment type="sequence caution" evidence="17">
    <conflict type="miscellaneous discrepancy">
        <sequence resource="EMBL-CDS" id="BAA90971"/>
    </conflict>
    <text>Contaminating sequence. Potential poly-A sequence.</text>
</comment>
<comment type="sequence caution" evidence="17">
    <conflict type="erroneous initiation">
        <sequence resource="EMBL-CDS" id="BAB13416"/>
    </conflict>
    <text>Extended N-terminus.</text>
</comment>
<comment type="sequence caution" evidence="17">
    <conflict type="erroneous initiation">
        <sequence resource="EMBL-CDS" id="BAB15530"/>
    </conflict>
    <text>Truncated N-terminus.</text>
</comment>
<name>KI16B_HUMAN</name>
<proteinExistence type="evidence at protein level"/>
<keyword id="KW-0002">3D-structure</keyword>
<keyword id="KW-0025">Alternative splicing</keyword>
<keyword id="KW-0067">ATP-binding</keyword>
<keyword id="KW-0175">Coiled coil</keyword>
<keyword id="KW-0963">Cytoplasm</keyword>
<keyword id="KW-0206">Cytoskeleton</keyword>
<keyword id="KW-0967">Endosome</keyword>
<keyword id="KW-0446">Lipid-binding</keyword>
<keyword id="KW-0472">Membrane</keyword>
<keyword id="KW-0493">Microtubule</keyword>
<keyword id="KW-0505">Motor protein</keyword>
<keyword id="KW-0547">Nucleotide-binding</keyword>
<keyword id="KW-0597">Phosphoprotein</keyword>
<keyword id="KW-1267">Proteomics identification</keyword>
<keyword id="KW-1185">Reference proteome</keyword>
<keyword id="KW-0813">Transport</keyword>
<organism>
    <name type="scientific">Homo sapiens</name>
    <name type="common">Human</name>
    <dbReference type="NCBI Taxonomy" id="9606"/>
    <lineage>
        <taxon>Eukaryota</taxon>
        <taxon>Metazoa</taxon>
        <taxon>Chordata</taxon>
        <taxon>Craniata</taxon>
        <taxon>Vertebrata</taxon>
        <taxon>Euteleostomi</taxon>
        <taxon>Mammalia</taxon>
        <taxon>Eutheria</taxon>
        <taxon>Euarchontoglires</taxon>
        <taxon>Primates</taxon>
        <taxon>Haplorrhini</taxon>
        <taxon>Catarrhini</taxon>
        <taxon>Hominidae</taxon>
        <taxon>Homo</taxon>
    </lineage>
</organism>
<feature type="chain" id="PRO_0000125466" description="Kinesin-like protein KIF16B">
    <location>
        <begin position="1"/>
        <end position="1317"/>
    </location>
</feature>
<feature type="domain" description="Kinesin motor" evidence="4">
    <location>
        <begin position="3"/>
        <end position="358"/>
    </location>
</feature>
<feature type="domain" description="FHA">
    <location>
        <begin position="478"/>
        <end position="529"/>
    </location>
</feature>
<feature type="domain" description="PX" evidence="3">
    <location>
        <begin position="1182"/>
        <end position="1296"/>
    </location>
</feature>
<feature type="region of interest" description="Disordered" evidence="5">
    <location>
        <begin position="1036"/>
        <end position="1057"/>
    </location>
</feature>
<feature type="coiled-coil region" evidence="2">
    <location>
        <begin position="370"/>
        <end position="425"/>
    </location>
</feature>
<feature type="coiled-coil region" evidence="2">
    <location>
        <begin position="595"/>
        <end position="882"/>
    </location>
</feature>
<feature type="coiled-coil region" evidence="2">
    <location>
        <begin position="936"/>
        <end position="1087"/>
    </location>
</feature>
<feature type="compositionally biased region" description="Polar residues" evidence="5">
    <location>
        <begin position="1036"/>
        <end position="1048"/>
    </location>
</feature>
<feature type="binding site" evidence="4">
    <location>
        <begin position="102"/>
        <end position="109"/>
    </location>
    <ligand>
        <name>ATP</name>
        <dbReference type="ChEBI" id="CHEBI:30616"/>
    </ligand>
</feature>
<feature type="modified residue" description="Phosphoserine" evidence="18">
    <location>
        <position position="398"/>
    </location>
</feature>
<feature type="modified residue" description="Phosphothreonine" evidence="18">
    <location>
        <position position="577"/>
    </location>
</feature>
<feature type="modified residue" description="Phosphoserine" evidence="18">
    <location>
        <position position="582"/>
    </location>
</feature>
<feature type="modified residue" description="Phosphoserine" evidence="18">
    <location>
        <position position="1052"/>
    </location>
</feature>
<feature type="splice variant" id="VSP_015858" description="In isoform 4." evidence="16">
    <location>
        <begin position="685"/>
        <end position="840"/>
    </location>
</feature>
<feature type="splice variant" id="VSP_010851" description="In isoform 2." evidence="14 15">
    <original>RMVSRSLGANPDDLKDPIKISIPRYVLCGQGKDAHFEFEVKITVLDETWTVFRRYSRFREMHKTLKLKYAELAALEFPPKKLFGNKDERVIAERRSHLEKYLRDFFSVMLQSATSPLHINKVGLTLSKHTICEFSPFFKKGVFDYSSHGTG</original>
    <variation>LCRDLLCVLMPEPDAAACANHPLLQQDLVQLSLDWKTEIPDLVLPNGVQVSSKFQTTLVDMIYFLHGNMEVNVPSLAEVQLLLYTTVKVMGDSGHDQCQSLVLLNTHIALVKEDCVFYPRIRSRNIPPPGAQFDVIKCHALSEFRCVVVPEKKNVSTVELVFLQKLKPSVGSRNSPPEHLQEAPNVQLFTTPLYLQGSQNVAPEVWKLTFNSQDEALWLISHLTRL</variation>
    <location>
        <begin position="1167"/>
        <end position="1317"/>
    </location>
</feature>
<feature type="splice variant" id="VSP_041318" description="In isoform 5." evidence="15">
    <location>
        <begin position="1167"/>
        <end position="1207"/>
    </location>
</feature>
<feature type="splice variant" id="VSP_010852" description="In isoform 3." evidence="15">
    <location>
        <begin position="1208"/>
        <end position="1237"/>
    </location>
</feature>
<feature type="sequence variant" id="VAR_036218" description="In a breast cancer sample; somatic mutation." evidence="9">
    <original>K</original>
    <variation>T</variation>
    <location>
        <position position="772"/>
    </location>
</feature>
<feature type="sequence variant" id="VAR_049700" description="In dbSNP:rs2236145.">
    <original>G</original>
    <variation>R</variation>
    <location>
        <position position="810"/>
    </location>
</feature>
<feature type="sequence variant" id="VAR_019396" description="In dbSNP:rs2236144.">
    <original>R</original>
    <variation>S</variation>
    <location>
        <position position="824"/>
    </location>
</feature>
<feature type="sequence variant" id="VAR_065248" description="In dbSNP:rs8116503.">
    <original>K</original>
    <variation>N</variation>
    <location>
        <position position="999"/>
    </location>
</feature>
<feature type="sequence variant" id="VAR_019397" description="In dbSNP:rs6034464." evidence="6 7 11">
    <original>M</original>
    <variation>T</variation>
    <location>
        <position position="1027"/>
    </location>
</feature>
<feature type="sequence variant" id="VAR_019398" description="In dbSNP:rs8123195.">
    <original>N</original>
    <variation>S</variation>
    <location>
        <position position="1119"/>
    </location>
</feature>
<feature type="mutagenesis site" description="Impairs plus end-directed microtubule-dependent motor activity, leading to impair EGFR recycling." evidence="8">
    <original>S</original>
    <variation>A</variation>
    <location>
        <position position="109"/>
    </location>
</feature>
<feature type="mutagenesis site" description="Abolishes PtdIns(3)P-binding." evidence="10">
    <original>R</original>
    <variation>A</variation>
    <location>
        <position position="1220"/>
    </location>
</feature>
<feature type="mutagenesis site" description="Induces a 3-fold decrease in PtdIns(3)P-binding; when associated with A-1229 and A-1232." evidence="10">
    <original>R</original>
    <variation>A</variation>
    <location>
        <position position="1225"/>
    </location>
</feature>
<feature type="mutagenesis site" description="Induces a 3-fold decrease in PtdIns(3)P-binding; when associated with A-1225 and A-1232." evidence="10">
    <original>K</original>
    <variation>A</variation>
    <location>
        <position position="1229"/>
    </location>
</feature>
<feature type="mutagenesis site" description="Induces a 3-fold decrease in PtdIns(3)P-binding; when associated with A-1225 and A-1229." evidence="10">
    <original>K</original>
    <variation>A</variation>
    <location>
        <position position="1232"/>
    </location>
</feature>
<feature type="mutagenesis site" description="Induces a 7-fold decrease in PtdIns(3)P-binding and abolishes endosome localization. Induces a 25-fold decrease in PtdIns(3)P-binding; when associated with A-1249." evidence="10">
    <original>L</original>
    <variation>A</variation>
    <location>
        <position position="1248"/>
    </location>
</feature>
<feature type="mutagenesis site" description="Induces a 6-fold decrease in PtdIns(3)P-binding." evidence="10">
    <original>L</original>
    <variation>V</variation>
    <location>
        <position position="1248"/>
    </location>
</feature>
<feature type="mutagenesis site" description="Induces a 5-fold decrease in PtdIns(3)P-binding and abolishes endosome localization. Induces a 25-fold decrease in PtdIns(3)P-binding; when associated with A-1248." evidence="10">
    <original>F</original>
    <variation>A</variation>
    <location>
        <position position="1249"/>
    </location>
</feature>
<feature type="mutagenesis site" description="Induces a 30-fold decrease in PtdIns(3)P-binding." evidence="10">
    <original>R</original>
    <variation>A</variation>
    <location>
        <position position="1260"/>
    </location>
</feature>
<feature type="sequence conflict" description="In Ref. 7; AK095322." evidence="17" ref="7">
    <original>K</original>
    <variation>E</variation>
    <location>
        <position position="18"/>
    </location>
</feature>
<feature type="sequence conflict" description="In Ref. 2; CAI46105." evidence="17" ref="2">
    <original>N</original>
    <variation>D</variation>
    <location>
        <position position="274"/>
    </location>
</feature>
<feature type="sequence conflict" description="In Ref. 7; BAA90971." evidence="17" ref="7">
    <original>R</original>
    <variation>H</variation>
    <location>
        <position position="583"/>
    </location>
</feature>
<feature type="sequence conflict" description="In Ref. 2; CAI46266." evidence="17" ref="2">
    <original>L</original>
    <variation>H</variation>
    <location>
        <position position="649"/>
    </location>
</feature>
<feature type="sequence conflict" description="In Ref. 6; AAH34984." evidence="17" ref="6">
    <original>EQ</original>
    <variation>SE</variation>
    <location>
        <begin position="1056"/>
        <end position="1057"/>
    </location>
</feature>
<feature type="sequence conflict" description="In Ref. 2; CAI46105." evidence="17" ref="2">
    <original>S</original>
    <variation>N</variation>
    <location>
        <position position="1100"/>
    </location>
</feature>
<feature type="sequence conflict" description="In Ref. 6; AAH34984." evidence="17" ref="6">
    <original>S</original>
    <variation>L</variation>
    <location>
        <position position="1108"/>
    </location>
</feature>
<feature type="sequence conflict" description="In Ref. 3; AAO17292 and 7; BAB15530." evidence="17" ref="3 7">
    <original>P</original>
    <variation>A</variation>
    <location>
        <position position="1244"/>
    </location>
</feature>
<feature type="strand" evidence="19">
    <location>
        <begin position="1184"/>
        <end position="1196"/>
    </location>
</feature>
<feature type="strand" evidence="19">
    <location>
        <begin position="1201"/>
        <end position="1210"/>
    </location>
</feature>
<feature type="strand" evidence="19">
    <location>
        <begin position="1213"/>
        <end position="1219"/>
    </location>
</feature>
<feature type="helix" evidence="19">
    <location>
        <begin position="1221"/>
        <end position="1234"/>
    </location>
</feature>
<feature type="helix" evidence="19">
    <location>
        <begin position="1236"/>
        <end position="1240"/>
    </location>
</feature>
<feature type="helix" evidence="19">
    <location>
        <begin position="1254"/>
        <end position="1277"/>
    </location>
</feature>
<feature type="helix" evidence="20">
    <location>
        <begin position="1285"/>
        <end position="1287"/>
    </location>
</feature>
<feature type="helix" evidence="19">
    <location>
        <begin position="1294"/>
        <end position="1300"/>
    </location>
</feature>
<feature type="helix" evidence="19">
    <location>
        <begin position="1302"/>
        <end position="1304"/>
    </location>
</feature>
<sequence>MASVKVAVRVRPMNRREKDLEAKFIIQMEKSKTTITNLKIPEGGTGDSGRERTKTFTYDFSFYSADTKSPDYVSQEMVFKTLGTDVVKSAFEGYNACVFAYGQTGSGKSYTMMGNSGDSGLIPRICEGLFSRINETTRWDEASFRTEVSYLEIYNERVRDLLRRKSSKTFNLRVREHPKEGPYVEDLSKHLVQNYGDVEELMDAGNINRTTAATGMNDVSSRSHAIFTIKFTQAKFDSEMPCETVSKIHLVDLAGSERADATGATGVRLKEGGNINKSLVTLGNVISALADLSQDAANTLAKKKQVFVPYRDSVLTWLLKDSLGGNSKTIMIATISPADVNYGETLSTLRYANRAKNIINKPTINEDANVKLIRELRAEIARLKTLLAQGNQIALLDSPTALSMEEKLQQNEARVQELTKEWTNKWNETQNILKEQTLALRKEGIGVVLDSELPHLIGIDDDLLSTGIILYHLKEGQTYVGRDDASTEQDIVLHGLDLESEHCIFENIGGTVTLIPLSGSQCSVNGVQIVEATHLNQGAVILLGRTNMFRFNHPKEAAKLREKRKSGLLSSFSLSMTDLSKSRENLSAVMLYNPGLEFERQQREELEKLESKRKLIEEMEEKQKSDKAELERMQQEVETQRKETEIVQLQIRKQEESLKRRSFHIENKLKDLLAEKEKFEEERLREQQEIELQKKRQEEETFLRVQEELQRLKELNNNEKAEKFQIFQELDQLQKEKDEQYAKLELEKKRLEEQEKEQVMLVAHLEEQLREKQEMIQLLRRGEVQWVEEEKRDLEGIRESLLRVKEARAGGDEDGEELEKAQLRFFEFKRRQLVKLVNLEKDLVQQKDILKKEVQEEQEILECLKCEHDKESRLLEKHDESVTDVTEVPQDFEKIKPVEYRLQYKERQLQYLLQNHLPTLLEEKQRAFEILDRGPLSLDNTLYQVEKEMEEKEEQLAQYQANANQLQKLQATFEFTANIARQEEKVRKKEKEILESREKQQREALERALARLERRHSALQRHSTLGMEIEEQRQKLASLNSGSREQSGLQASLEAEQEALEKDQERLEYEIQQLKQKIYEVDGVQKDHHGTLEGKVASSSLPVSAEKSHLVPLMDARINAYIEEEVQRRLQDLHRVISEGCSTSADTMKDNEKLHNGTIQRKLKYERMVSRSLGANPDDLKDPIKISIPRYVLCGQGKDAHFEFEVKITVLDETWTVFRRYSRFREMHKTLKLKYAELAALEFPPKKLFGNKDERVIAERRSHLEKYLRDFFSVMLQSATSPLHINKVGLTLSKHTICEFSPFFKKGVFDYSSHGTG</sequence>
<gene>
    <name type="primary">KIF16B</name>
    <name type="synonym">C20orf23</name>
    <name type="synonym">KIAA1590</name>
    <name type="synonym">SNX23</name>
</gene>
<accession>Q96L93</accession>
<accession>A6NKJ9</accession>
<accession>A7E2A8</accession>
<accession>B1AKG3</accession>
<accession>B1AKT7</accession>
<accession>C9JDN5</accession>
<accession>C9JI52</accession>
<accession>C9JSM8</accession>
<accession>C9JWJ7</accession>
<accession>Q2TBF5</accession>
<accession>Q5HYC0</accession>
<accession>Q5HYK1</accession>
<accession>Q5JWW3</accession>
<accession>Q5TFK5</accession>
<accession>Q86VL9</accession>
<accession>Q86YS5</accession>
<accession>Q8IYU0</accession>
<accession>Q9BQJ8</accession>
<accession>Q9BQM0</accession>
<accession>Q9BQM1</accession>
<accession>Q9BQM5</accession>
<accession>Q9H5U0</accession>
<accession>Q9HCI2</accession>
<accession>Q9NXN9</accession>
<dbReference type="EMBL" id="AB046810">
    <property type="protein sequence ID" value="BAB13416.2"/>
    <property type="status" value="ALT_INIT"/>
    <property type="molecule type" value="mRNA"/>
</dbReference>
<dbReference type="EMBL" id="BX647572">
    <property type="protein sequence ID" value="CAI46105.1"/>
    <property type="molecule type" value="mRNA"/>
</dbReference>
<dbReference type="EMBL" id="BX648426">
    <property type="protein sequence ID" value="CAI46266.1"/>
    <property type="molecule type" value="mRNA"/>
</dbReference>
<dbReference type="EMBL" id="AY166853">
    <property type="protein sequence ID" value="AAO17292.1"/>
    <property type="molecule type" value="mRNA"/>
</dbReference>
<dbReference type="EMBL" id="AL049794">
    <property type="status" value="NOT_ANNOTATED_CDS"/>
    <property type="molecule type" value="Genomic_DNA"/>
</dbReference>
<dbReference type="EMBL" id="AL117376">
    <property type="status" value="NOT_ANNOTATED_CDS"/>
    <property type="molecule type" value="Genomic_DNA"/>
</dbReference>
<dbReference type="EMBL" id="AL118509">
    <property type="status" value="NOT_ANNOTATED_CDS"/>
    <property type="molecule type" value="Genomic_DNA"/>
</dbReference>
<dbReference type="EMBL" id="CH471133">
    <property type="protein sequence ID" value="EAX10290.1"/>
    <property type="molecule type" value="Genomic_DNA"/>
</dbReference>
<dbReference type="EMBL" id="BC034984">
    <property type="protein sequence ID" value="AAH34984.2"/>
    <property type="molecule type" value="mRNA"/>
</dbReference>
<dbReference type="EMBL" id="BC110317">
    <property type="protein sequence ID" value="AAI10318.1"/>
    <property type="molecule type" value="mRNA"/>
</dbReference>
<dbReference type="EMBL" id="BC150261">
    <property type="protein sequence ID" value="AAI50262.1"/>
    <property type="molecule type" value="mRNA"/>
</dbReference>
<dbReference type="EMBL" id="AY044654">
    <property type="protein sequence ID" value="AAK98768.1"/>
    <property type="molecule type" value="mRNA"/>
</dbReference>
<dbReference type="EMBL" id="AK000142">
    <property type="protein sequence ID" value="BAA90971.1"/>
    <property type="status" value="ALT_SEQ"/>
    <property type="molecule type" value="mRNA"/>
</dbReference>
<dbReference type="EMBL" id="AK026698">
    <property type="protein sequence ID" value="BAB15530.1"/>
    <property type="status" value="ALT_INIT"/>
    <property type="molecule type" value="mRNA"/>
</dbReference>
<dbReference type="EMBL" id="AK095322">
    <property type="status" value="NOT_ANNOTATED_CDS"/>
    <property type="molecule type" value="mRNA"/>
</dbReference>
<dbReference type="CCDS" id="CCDS13122.1">
    <molecule id="Q96L93-1"/>
</dbReference>
<dbReference type="CCDS" id="CCDS56178.1">
    <molecule id="Q96L93-2"/>
</dbReference>
<dbReference type="RefSeq" id="NP_001186794.1">
    <property type="nucleotide sequence ID" value="NM_001199865.1"/>
</dbReference>
<dbReference type="RefSeq" id="NP_001186795.1">
    <molecule id="Q96L93-2"/>
    <property type="nucleotide sequence ID" value="NM_001199866.2"/>
</dbReference>
<dbReference type="RefSeq" id="NP_078980.3">
    <molecule id="Q96L93-1"/>
    <property type="nucleotide sequence ID" value="NM_024704.4"/>
</dbReference>
<dbReference type="RefSeq" id="XP_016883415.1">
    <molecule id="Q96L93-6"/>
    <property type="nucleotide sequence ID" value="XM_017027926.2"/>
</dbReference>
<dbReference type="RefSeq" id="XP_047296218.1">
    <molecule id="Q96L93-4"/>
    <property type="nucleotide sequence ID" value="XM_047440262.1"/>
</dbReference>
<dbReference type="PDB" id="2V14">
    <property type="method" value="X-ray"/>
    <property type="resolution" value="2.20 A"/>
    <property type="chains" value="A=1179-1312"/>
</dbReference>
<dbReference type="PDB" id="6EE0">
    <property type="method" value="X-ray"/>
    <property type="resolution" value="2.52 A"/>
    <property type="chains" value="A/B/C=1182-1312"/>
</dbReference>
<dbReference type="PDBsum" id="2V14"/>
<dbReference type="PDBsum" id="6EE0"/>
<dbReference type="SMR" id="Q96L93"/>
<dbReference type="BioGRID" id="120754">
    <property type="interactions" value="84"/>
</dbReference>
<dbReference type="FunCoup" id="Q96L93">
    <property type="interactions" value="1496"/>
</dbReference>
<dbReference type="IntAct" id="Q96L93">
    <property type="interactions" value="38"/>
</dbReference>
<dbReference type="MINT" id="Q96L93"/>
<dbReference type="STRING" id="9606.ENSP00000384164"/>
<dbReference type="TCDB" id="3.A.34.1.1">
    <property type="family name" value="the sorting nexins of the escrt complexes (sn-escrt)"/>
</dbReference>
<dbReference type="iPTMnet" id="Q96L93"/>
<dbReference type="MetOSite" id="Q96L93"/>
<dbReference type="PhosphoSitePlus" id="Q96L93"/>
<dbReference type="BioMuta" id="KIF16B"/>
<dbReference type="DMDM" id="50403793"/>
<dbReference type="jPOST" id="Q96L93"/>
<dbReference type="MassIVE" id="Q96L93"/>
<dbReference type="PaxDb" id="9606-ENSP00000384164"/>
<dbReference type="PeptideAtlas" id="Q96L93"/>
<dbReference type="ProteomicsDB" id="77165">
    <molecule id="Q96L93-1"/>
</dbReference>
<dbReference type="ProteomicsDB" id="77166">
    <molecule id="Q96L93-2"/>
</dbReference>
<dbReference type="ProteomicsDB" id="77167">
    <molecule id="Q96L93-4"/>
</dbReference>
<dbReference type="ProteomicsDB" id="77168">
    <molecule id="Q96L93-5"/>
</dbReference>
<dbReference type="ProteomicsDB" id="77169">
    <molecule id="Q96L93-6"/>
</dbReference>
<dbReference type="Pumba" id="Q96L93"/>
<dbReference type="Antibodypedia" id="24366">
    <property type="antibodies" value="102 antibodies from 15 providers"/>
</dbReference>
<dbReference type="DNASU" id="55614"/>
<dbReference type="Ensembl" id="ENST00000354981.7">
    <molecule id="Q96L93-1"/>
    <property type="protein sequence ID" value="ENSP00000347076.2"/>
    <property type="gene ID" value="ENSG00000089177.20"/>
</dbReference>
<dbReference type="Ensembl" id="ENST00000408042.5">
    <molecule id="Q96L93-2"/>
    <property type="protein sequence ID" value="ENSP00000384164.1"/>
    <property type="gene ID" value="ENSG00000089177.20"/>
</dbReference>
<dbReference type="GeneID" id="55614"/>
<dbReference type="KEGG" id="hsa:55614"/>
<dbReference type="MANE-Select" id="ENST00000354981.7">
    <property type="protein sequence ID" value="ENSP00000347076.2"/>
    <property type="RefSeq nucleotide sequence ID" value="NM_024704.5"/>
    <property type="RefSeq protein sequence ID" value="NP_078980.3"/>
</dbReference>
<dbReference type="UCSC" id="uc002wpg.3">
    <molecule id="Q96L93-1"/>
    <property type="organism name" value="human"/>
</dbReference>
<dbReference type="AGR" id="HGNC:15869"/>
<dbReference type="CTD" id="55614"/>
<dbReference type="DisGeNET" id="55614"/>
<dbReference type="GeneCards" id="KIF16B"/>
<dbReference type="HGNC" id="HGNC:15869">
    <property type="gene designation" value="KIF16B"/>
</dbReference>
<dbReference type="HPA" id="ENSG00000089177">
    <property type="expression patterns" value="Low tissue specificity"/>
</dbReference>
<dbReference type="MalaCards" id="KIF16B"/>
<dbReference type="MIM" id="618171">
    <property type="type" value="gene"/>
</dbReference>
<dbReference type="neXtProt" id="NX_Q96L93"/>
<dbReference type="OpenTargets" id="ENSG00000089177"/>
<dbReference type="PharmGKB" id="PA162393227"/>
<dbReference type="VEuPathDB" id="HostDB:ENSG00000089177"/>
<dbReference type="eggNOG" id="KOG0245">
    <property type="taxonomic scope" value="Eukaryota"/>
</dbReference>
<dbReference type="eggNOG" id="KOG2101">
    <property type="taxonomic scope" value="Eukaryota"/>
</dbReference>
<dbReference type="GeneTree" id="ENSGT00940000162838"/>
<dbReference type="HOGENOM" id="CLU_001485_35_0_1"/>
<dbReference type="InParanoid" id="Q96L93"/>
<dbReference type="OMA" id="HWHGAQQ"/>
<dbReference type="OrthoDB" id="3176171at2759"/>
<dbReference type="PAN-GO" id="Q96L93">
    <property type="GO annotations" value="6 GO annotations based on evolutionary models"/>
</dbReference>
<dbReference type="PhylomeDB" id="Q96L93"/>
<dbReference type="TreeFam" id="TF105221"/>
<dbReference type="BRENDA" id="5.6.1.3">
    <property type="organism ID" value="2681"/>
</dbReference>
<dbReference type="PathwayCommons" id="Q96L93"/>
<dbReference type="Reactome" id="R-HSA-6811434">
    <property type="pathway name" value="COPI-dependent Golgi-to-ER retrograde traffic"/>
</dbReference>
<dbReference type="Reactome" id="R-HSA-983189">
    <property type="pathway name" value="Kinesins"/>
</dbReference>
<dbReference type="SignaLink" id="Q96L93"/>
<dbReference type="SIGNOR" id="Q96L93"/>
<dbReference type="BioGRID-ORCS" id="55614">
    <property type="hits" value="11 hits in 1154 CRISPR screens"/>
</dbReference>
<dbReference type="ChiTaRS" id="KIF16B">
    <property type="organism name" value="human"/>
</dbReference>
<dbReference type="EvolutionaryTrace" id="Q96L93"/>
<dbReference type="GeneWiki" id="KIF16B"/>
<dbReference type="GenomeRNAi" id="55614"/>
<dbReference type="Pharos" id="Q96L93">
    <property type="development level" value="Tbio"/>
</dbReference>
<dbReference type="PRO" id="PR:Q96L93"/>
<dbReference type="Proteomes" id="UP000005640">
    <property type="component" value="Chromosome 20"/>
</dbReference>
<dbReference type="RNAct" id="Q96L93">
    <property type="molecule type" value="protein"/>
</dbReference>
<dbReference type="Bgee" id="ENSG00000089177">
    <property type="expression patterns" value="Expressed in sural nerve and 181 other cell types or tissues"/>
</dbReference>
<dbReference type="ExpressionAtlas" id="Q96L93">
    <property type="expression patterns" value="baseline and differential"/>
</dbReference>
<dbReference type="GO" id="GO:0005737">
    <property type="term" value="C:cytoplasm"/>
    <property type="evidence" value="ECO:0000314"/>
    <property type="project" value="UniProtKB"/>
</dbReference>
<dbReference type="GO" id="GO:0005829">
    <property type="term" value="C:cytosol"/>
    <property type="evidence" value="ECO:0007669"/>
    <property type="project" value="GOC"/>
</dbReference>
<dbReference type="GO" id="GO:0005769">
    <property type="term" value="C:early endosome"/>
    <property type="evidence" value="ECO:0000314"/>
    <property type="project" value="UniProtKB"/>
</dbReference>
<dbReference type="GO" id="GO:0031901">
    <property type="term" value="C:early endosome membrane"/>
    <property type="evidence" value="ECO:0007669"/>
    <property type="project" value="UniProtKB-SubCell"/>
</dbReference>
<dbReference type="GO" id="GO:0005768">
    <property type="term" value="C:endosome"/>
    <property type="evidence" value="ECO:0000314"/>
    <property type="project" value="UniProtKB"/>
</dbReference>
<dbReference type="GO" id="GO:0005871">
    <property type="term" value="C:kinesin complex"/>
    <property type="evidence" value="ECO:0000318"/>
    <property type="project" value="GO_Central"/>
</dbReference>
<dbReference type="GO" id="GO:0005874">
    <property type="term" value="C:microtubule"/>
    <property type="evidence" value="ECO:0000318"/>
    <property type="project" value="GO_Central"/>
</dbReference>
<dbReference type="GO" id="GO:0005819">
    <property type="term" value="C:spindle"/>
    <property type="evidence" value="ECO:0000314"/>
    <property type="project" value="UniProtKB"/>
</dbReference>
<dbReference type="GO" id="GO:0005524">
    <property type="term" value="F:ATP binding"/>
    <property type="evidence" value="ECO:0007669"/>
    <property type="project" value="UniProtKB-KW"/>
</dbReference>
<dbReference type="GO" id="GO:0016887">
    <property type="term" value="F:ATP hydrolysis activity"/>
    <property type="evidence" value="ECO:0000318"/>
    <property type="project" value="GO_Central"/>
</dbReference>
<dbReference type="GO" id="GO:0008017">
    <property type="term" value="F:microtubule binding"/>
    <property type="evidence" value="ECO:0000318"/>
    <property type="project" value="GO_Central"/>
</dbReference>
<dbReference type="GO" id="GO:0005547">
    <property type="term" value="F:phosphatidylinositol-3,4,5-trisphosphate binding"/>
    <property type="evidence" value="ECO:0000314"/>
    <property type="project" value="UniProtKB"/>
</dbReference>
<dbReference type="GO" id="GO:0043325">
    <property type="term" value="F:phosphatidylinositol-3,4-bisphosphate binding"/>
    <property type="evidence" value="ECO:0000314"/>
    <property type="project" value="UniProtKB"/>
</dbReference>
<dbReference type="GO" id="GO:0080025">
    <property type="term" value="F:phosphatidylinositol-3,5-bisphosphate binding"/>
    <property type="evidence" value="ECO:0000314"/>
    <property type="project" value="UniProtKB"/>
</dbReference>
<dbReference type="GO" id="GO:0032266">
    <property type="term" value="F:phosphatidylinositol-3-phosphate binding"/>
    <property type="evidence" value="ECO:0000314"/>
    <property type="project" value="UniProtKB"/>
</dbReference>
<dbReference type="GO" id="GO:0008574">
    <property type="term" value="F:plus-end-directed microtubule motor activity"/>
    <property type="evidence" value="ECO:0000314"/>
    <property type="project" value="UniProtKB"/>
</dbReference>
<dbReference type="GO" id="GO:0045022">
    <property type="term" value="P:early endosome to late endosome transport"/>
    <property type="evidence" value="ECO:0000315"/>
    <property type="project" value="UniProtKB"/>
</dbReference>
<dbReference type="GO" id="GO:0007492">
    <property type="term" value="P:endoderm development"/>
    <property type="evidence" value="ECO:0000250"/>
    <property type="project" value="UniProtKB"/>
</dbReference>
<dbReference type="GO" id="GO:0007173">
    <property type="term" value="P:epidermal growth factor receptor signaling pathway"/>
    <property type="evidence" value="ECO:0000315"/>
    <property type="project" value="UniProtKB"/>
</dbReference>
<dbReference type="GO" id="GO:0008543">
    <property type="term" value="P:fibroblast growth factor receptor signaling pathway"/>
    <property type="evidence" value="ECO:0000250"/>
    <property type="project" value="UniProtKB"/>
</dbReference>
<dbReference type="GO" id="GO:0001704">
    <property type="term" value="P:formation of primary germ layer"/>
    <property type="evidence" value="ECO:0000250"/>
    <property type="project" value="UniProtKB"/>
</dbReference>
<dbReference type="GO" id="GO:0006895">
    <property type="term" value="P:Golgi to endosome transport"/>
    <property type="evidence" value="ECO:0000250"/>
    <property type="project" value="UniProtKB"/>
</dbReference>
<dbReference type="GO" id="GO:0032801">
    <property type="term" value="P:receptor catabolic process"/>
    <property type="evidence" value="ECO:0000315"/>
    <property type="project" value="UniProtKB"/>
</dbReference>
<dbReference type="GO" id="GO:0001919">
    <property type="term" value="P:regulation of receptor recycling"/>
    <property type="evidence" value="ECO:0000315"/>
    <property type="project" value="UniProtKB"/>
</dbReference>
<dbReference type="GO" id="GO:0047496">
    <property type="term" value="P:vesicle transport along microtubule"/>
    <property type="evidence" value="ECO:0000318"/>
    <property type="project" value="GO_Central"/>
</dbReference>
<dbReference type="CDD" id="cd22732">
    <property type="entry name" value="FHA_KIF16B"/>
    <property type="match status" value="1"/>
</dbReference>
<dbReference type="CDD" id="cd01365">
    <property type="entry name" value="KISc_KIF1A_KIF1B"/>
    <property type="match status" value="1"/>
</dbReference>
<dbReference type="CDD" id="cd06874">
    <property type="entry name" value="PX_KIF16B_SNX23"/>
    <property type="match status" value="1"/>
</dbReference>
<dbReference type="FunFam" id="2.60.200.20:FF:000005">
    <property type="entry name" value="Kinesin family member 16B"/>
    <property type="match status" value="1"/>
</dbReference>
<dbReference type="FunFam" id="3.30.1520.10:FF:000022">
    <property type="entry name" value="Kinesin family member 16B"/>
    <property type="match status" value="1"/>
</dbReference>
<dbReference type="FunFam" id="3.40.850.10:FF:000021">
    <property type="entry name" value="kinesin-like protein KIF16B isoform X1"/>
    <property type="match status" value="1"/>
</dbReference>
<dbReference type="Gene3D" id="2.60.200.20">
    <property type="match status" value="1"/>
</dbReference>
<dbReference type="Gene3D" id="3.40.850.10">
    <property type="entry name" value="Kinesin motor domain"/>
    <property type="match status" value="1"/>
</dbReference>
<dbReference type="Gene3D" id="3.30.1520.10">
    <property type="entry name" value="Phox-like domain"/>
    <property type="match status" value="1"/>
</dbReference>
<dbReference type="InterPro" id="IPR000253">
    <property type="entry name" value="FHA_dom"/>
</dbReference>
<dbReference type="InterPro" id="IPR019821">
    <property type="entry name" value="Kinesin_motor_CS"/>
</dbReference>
<dbReference type="InterPro" id="IPR001752">
    <property type="entry name" value="Kinesin_motor_dom"/>
</dbReference>
<dbReference type="InterPro" id="IPR036961">
    <property type="entry name" value="Kinesin_motor_dom_sf"/>
</dbReference>
<dbReference type="InterPro" id="IPR027417">
    <property type="entry name" value="P-loop_NTPase"/>
</dbReference>
<dbReference type="InterPro" id="IPR001683">
    <property type="entry name" value="PX_dom"/>
</dbReference>
<dbReference type="InterPro" id="IPR036871">
    <property type="entry name" value="PX_dom_sf"/>
</dbReference>
<dbReference type="InterPro" id="IPR008984">
    <property type="entry name" value="SMAD_FHA_dom_sf"/>
</dbReference>
<dbReference type="PANTHER" id="PTHR47117:SF8">
    <property type="entry name" value="KINESIN FAMILY MEMBER 16B"/>
    <property type="match status" value="1"/>
</dbReference>
<dbReference type="PANTHER" id="PTHR47117">
    <property type="entry name" value="STAR-RELATED LIPID TRANSFER PROTEIN 9"/>
    <property type="match status" value="1"/>
</dbReference>
<dbReference type="Pfam" id="PF00498">
    <property type="entry name" value="FHA"/>
    <property type="match status" value="1"/>
</dbReference>
<dbReference type="Pfam" id="PF00225">
    <property type="entry name" value="Kinesin"/>
    <property type="match status" value="1"/>
</dbReference>
<dbReference type="Pfam" id="PF00787">
    <property type="entry name" value="PX"/>
    <property type="match status" value="1"/>
</dbReference>
<dbReference type="PRINTS" id="PR00380">
    <property type="entry name" value="KINESINHEAVY"/>
</dbReference>
<dbReference type="SMART" id="SM00129">
    <property type="entry name" value="KISc"/>
    <property type="match status" value="1"/>
</dbReference>
<dbReference type="SMART" id="SM00312">
    <property type="entry name" value="PX"/>
    <property type="match status" value="1"/>
</dbReference>
<dbReference type="SUPFAM" id="SSF52540">
    <property type="entry name" value="P-loop containing nucleoside triphosphate hydrolases"/>
    <property type="match status" value="1"/>
</dbReference>
<dbReference type="SUPFAM" id="SSF64268">
    <property type="entry name" value="PX domain"/>
    <property type="match status" value="1"/>
</dbReference>
<dbReference type="SUPFAM" id="SSF49879">
    <property type="entry name" value="SMAD/FHA domain"/>
    <property type="match status" value="1"/>
</dbReference>
<dbReference type="PROSITE" id="PS00411">
    <property type="entry name" value="KINESIN_MOTOR_1"/>
    <property type="match status" value="1"/>
</dbReference>
<dbReference type="PROSITE" id="PS50067">
    <property type="entry name" value="KINESIN_MOTOR_2"/>
    <property type="match status" value="1"/>
</dbReference>
<dbReference type="PROSITE" id="PS50195">
    <property type="entry name" value="PX"/>
    <property type="match status" value="1"/>
</dbReference>